<proteinExistence type="evidence at protein level"/>
<reference key="1">
    <citation type="journal article" date="2003" name="Gene">
        <title>Isolation of the mouse Tsll1 and Tsll2 genes, orthologues of the human TSLC1-like genes 1 and 2 (TSLL1 and TSLL2).</title>
        <authorList>
            <person name="Fukami T."/>
            <person name="Satoh H."/>
            <person name="Williams Y.N."/>
            <person name="Masuda M."/>
            <person name="Fukuhara H."/>
            <person name="Maruyama T."/>
            <person name="Yageta M."/>
            <person name="Kuramochi M."/>
            <person name="Takamoto S."/>
            <person name="Murakami Y."/>
        </authorList>
    </citation>
    <scope>NUCLEOTIDE SEQUENCE [MRNA]</scope>
    <scope>SUBCELLULAR LOCATION</scope>
    <scope>TISSUE SPECIFICITY</scope>
    <source>
        <strain>129/SvJ</strain>
    </source>
</reference>
<reference key="2">
    <citation type="journal article" date="2005" name="Biochim. Biophys. Acta">
        <title>Nectin-like molecule 1 is a protein 4.1N associated protein and recruits protein 4.1N from cytoplasm to the plasma membrane.</title>
        <authorList>
            <person name="Zhou Y."/>
            <person name="Du G."/>
            <person name="Hu X."/>
            <person name="Yu S."/>
            <person name="Liu Y."/>
            <person name="Xu Y."/>
            <person name="Huang X."/>
            <person name="Liu J."/>
            <person name="Yin B."/>
            <person name="Fan M."/>
            <person name="Peng X."/>
            <person name="Qiang B."/>
            <person name="Yuan J."/>
        </authorList>
    </citation>
    <scope>NUCLEOTIDE SEQUENCE [MRNA]</scope>
    <scope>FUNCTION</scope>
    <scope>INTERACTION WITH EPB41L1</scope>
    <scope>SUBCELLULAR LOCATION</scope>
    <scope>TOPOLOGY</scope>
    <scope>DEVELOPMENTAL STAGE</scope>
    <scope>TISSUE SPECIFICITY</scope>
</reference>
<reference key="3">
    <citation type="journal article" date="2005" name="Science">
        <title>The transcriptional landscape of the mammalian genome.</title>
        <authorList>
            <person name="Carninci P."/>
            <person name="Kasukawa T."/>
            <person name="Katayama S."/>
            <person name="Gough J."/>
            <person name="Frith M.C."/>
            <person name="Maeda N."/>
            <person name="Oyama R."/>
            <person name="Ravasi T."/>
            <person name="Lenhard B."/>
            <person name="Wells C."/>
            <person name="Kodzius R."/>
            <person name="Shimokawa K."/>
            <person name="Bajic V.B."/>
            <person name="Brenner S.E."/>
            <person name="Batalov S."/>
            <person name="Forrest A.R."/>
            <person name="Zavolan M."/>
            <person name="Davis M.J."/>
            <person name="Wilming L.G."/>
            <person name="Aidinis V."/>
            <person name="Allen J.E."/>
            <person name="Ambesi-Impiombato A."/>
            <person name="Apweiler R."/>
            <person name="Aturaliya R.N."/>
            <person name="Bailey T.L."/>
            <person name="Bansal M."/>
            <person name="Baxter L."/>
            <person name="Beisel K.W."/>
            <person name="Bersano T."/>
            <person name="Bono H."/>
            <person name="Chalk A.M."/>
            <person name="Chiu K.P."/>
            <person name="Choudhary V."/>
            <person name="Christoffels A."/>
            <person name="Clutterbuck D.R."/>
            <person name="Crowe M.L."/>
            <person name="Dalla E."/>
            <person name="Dalrymple B.P."/>
            <person name="de Bono B."/>
            <person name="Della Gatta G."/>
            <person name="di Bernardo D."/>
            <person name="Down T."/>
            <person name="Engstrom P."/>
            <person name="Fagiolini M."/>
            <person name="Faulkner G."/>
            <person name="Fletcher C.F."/>
            <person name="Fukushima T."/>
            <person name="Furuno M."/>
            <person name="Futaki S."/>
            <person name="Gariboldi M."/>
            <person name="Georgii-Hemming P."/>
            <person name="Gingeras T.R."/>
            <person name="Gojobori T."/>
            <person name="Green R.E."/>
            <person name="Gustincich S."/>
            <person name="Harbers M."/>
            <person name="Hayashi Y."/>
            <person name="Hensch T.K."/>
            <person name="Hirokawa N."/>
            <person name="Hill D."/>
            <person name="Huminiecki L."/>
            <person name="Iacono M."/>
            <person name="Ikeo K."/>
            <person name="Iwama A."/>
            <person name="Ishikawa T."/>
            <person name="Jakt M."/>
            <person name="Kanapin A."/>
            <person name="Katoh M."/>
            <person name="Kawasawa Y."/>
            <person name="Kelso J."/>
            <person name="Kitamura H."/>
            <person name="Kitano H."/>
            <person name="Kollias G."/>
            <person name="Krishnan S.P."/>
            <person name="Kruger A."/>
            <person name="Kummerfeld S.K."/>
            <person name="Kurochkin I.V."/>
            <person name="Lareau L.F."/>
            <person name="Lazarevic D."/>
            <person name="Lipovich L."/>
            <person name="Liu J."/>
            <person name="Liuni S."/>
            <person name="McWilliam S."/>
            <person name="Madan Babu M."/>
            <person name="Madera M."/>
            <person name="Marchionni L."/>
            <person name="Matsuda H."/>
            <person name="Matsuzawa S."/>
            <person name="Miki H."/>
            <person name="Mignone F."/>
            <person name="Miyake S."/>
            <person name="Morris K."/>
            <person name="Mottagui-Tabar S."/>
            <person name="Mulder N."/>
            <person name="Nakano N."/>
            <person name="Nakauchi H."/>
            <person name="Ng P."/>
            <person name="Nilsson R."/>
            <person name="Nishiguchi S."/>
            <person name="Nishikawa S."/>
            <person name="Nori F."/>
            <person name="Ohara O."/>
            <person name="Okazaki Y."/>
            <person name="Orlando V."/>
            <person name="Pang K.C."/>
            <person name="Pavan W.J."/>
            <person name="Pavesi G."/>
            <person name="Pesole G."/>
            <person name="Petrovsky N."/>
            <person name="Piazza S."/>
            <person name="Reed J."/>
            <person name="Reid J.F."/>
            <person name="Ring B.Z."/>
            <person name="Ringwald M."/>
            <person name="Rost B."/>
            <person name="Ruan Y."/>
            <person name="Salzberg S.L."/>
            <person name="Sandelin A."/>
            <person name="Schneider C."/>
            <person name="Schoenbach C."/>
            <person name="Sekiguchi K."/>
            <person name="Semple C.A."/>
            <person name="Seno S."/>
            <person name="Sessa L."/>
            <person name="Sheng Y."/>
            <person name="Shibata Y."/>
            <person name="Shimada H."/>
            <person name="Shimada K."/>
            <person name="Silva D."/>
            <person name="Sinclair B."/>
            <person name="Sperling S."/>
            <person name="Stupka E."/>
            <person name="Sugiura K."/>
            <person name="Sultana R."/>
            <person name="Takenaka Y."/>
            <person name="Taki K."/>
            <person name="Tammoja K."/>
            <person name="Tan S.L."/>
            <person name="Tang S."/>
            <person name="Taylor M.S."/>
            <person name="Tegner J."/>
            <person name="Teichmann S.A."/>
            <person name="Ueda H.R."/>
            <person name="van Nimwegen E."/>
            <person name="Verardo R."/>
            <person name="Wei C.L."/>
            <person name="Yagi K."/>
            <person name="Yamanishi H."/>
            <person name="Zabarovsky E."/>
            <person name="Zhu S."/>
            <person name="Zimmer A."/>
            <person name="Hide W."/>
            <person name="Bult C."/>
            <person name="Grimmond S.M."/>
            <person name="Teasdale R.D."/>
            <person name="Liu E.T."/>
            <person name="Brusic V."/>
            <person name="Quackenbush J."/>
            <person name="Wahlestedt C."/>
            <person name="Mattick J.S."/>
            <person name="Hume D.A."/>
            <person name="Kai C."/>
            <person name="Sasaki D."/>
            <person name="Tomaru Y."/>
            <person name="Fukuda S."/>
            <person name="Kanamori-Katayama M."/>
            <person name="Suzuki M."/>
            <person name="Aoki J."/>
            <person name="Arakawa T."/>
            <person name="Iida J."/>
            <person name="Imamura K."/>
            <person name="Itoh M."/>
            <person name="Kato T."/>
            <person name="Kawaji H."/>
            <person name="Kawagashira N."/>
            <person name="Kawashima T."/>
            <person name="Kojima M."/>
            <person name="Kondo S."/>
            <person name="Konno H."/>
            <person name="Nakano K."/>
            <person name="Ninomiya N."/>
            <person name="Nishio T."/>
            <person name="Okada M."/>
            <person name="Plessy C."/>
            <person name="Shibata K."/>
            <person name="Shiraki T."/>
            <person name="Suzuki S."/>
            <person name="Tagami M."/>
            <person name="Waki K."/>
            <person name="Watahiki A."/>
            <person name="Okamura-Oho Y."/>
            <person name="Suzuki H."/>
            <person name="Kawai J."/>
            <person name="Hayashizaki Y."/>
        </authorList>
    </citation>
    <scope>NUCLEOTIDE SEQUENCE [LARGE SCALE MRNA]</scope>
    <source>
        <strain>C57BL/6J</strain>
    </source>
</reference>
<reference key="4">
    <citation type="journal article" date="2004" name="Genome Res.">
        <title>The status, quality, and expansion of the NIH full-length cDNA project: the Mammalian Gene Collection (MGC).</title>
        <authorList>
            <consortium name="The MGC Project Team"/>
        </authorList>
    </citation>
    <scope>NUCLEOTIDE SEQUENCE [LARGE SCALE MRNA] OF 128-396</scope>
    <source>
        <tissue>Eye</tissue>
    </source>
</reference>
<reference key="5">
    <citation type="journal article" date="2005" name="J. Cell Sci.">
        <title>Nectin-like molecule-1/TSLL1/SynCAM3: a neural tissue-specific immunoglobulin-like cell-cell adhesion molecule localizing at non-junctional contact sites of presynaptic nerve terminals, axons and glia cell processes.</title>
        <authorList>
            <person name="Kakunaga S."/>
            <person name="Ikeda W."/>
            <person name="Itoh S."/>
            <person name="Deguchi-Tawarada M."/>
            <person name="Ohtsuka T."/>
            <person name="Mizoguchi A."/>
            <person name="Takai Y."/>
        </authorList>
    </citation>
    <scope>FUNCTION</scope>
    <scope>INTERACTION WITH NECTIN3; DLG3; PALS2 AND CASK</scope>
    <scope>SUBCELLULAR LOCATION</scope>
    <scope>TISSUE SPECIFICITY</scope>
</reference>
<reference key="6">
    <citation type="journal article" date="2010" name="Cell">
        <title>A tissue-specific atlas of mouse protein phosphorylation and expression.</title>
        <authorList>
            <person name="Huttlin E.L."/>
            <person name="Jedrychowski M.P."/>
            <person name="Elias J.E."/>
            <person name="Goswami T."/>
            <person name="Rad R."/>
            <person name="Beausoleil S.A."/>
            <person name="Villen J."/>
            <person name="Haas W."/>
            <person name="Sowa M.E."/>
            <person name="Gygi S.P."/>
        </authorList>
    </citation>
    <scope>PHOSPHORYLATION [LARGE SCALE ANALYSIS] AT SER-386</scope>
    <scope>IDENTIFICATION BY MASS SPECTROMETRY [LARGE SCALE ANALYSIS]</scope>
    <source>
        <tissue>Brain</tissue>
    </source>
</reference>
<reference key="7">
    <citation type="journal article" date="2021" name="Brain">
        <title>A CADM3 variant causes Charcot-Marie-Tooth disease with marked upper limb involvement.</title>
        <authorList>
            <person name="Rebelo A.P."/>
            <person name="Cortese A."/>
            <person name="Abraham A."/>
            <person name="Eshed-Eisenbach Y."/>
            <person name="Shner G."/>
            <person name="Vainshtein A."/>
            <person name="Buglo E."/>
            <person name="Camarena V."/>
            <person name="Gaidosh G."/>
            <person name="Shiekhattar R."/>
            <person name="Abreu L."/>
            <person name="Courel S."/>
            <person name="Burns D.K."/>
            <person name="Bai Y."/>
            <person name="Bacon C."/>
            <person name="Feely S.M.E."/>
            <person name="Castro D."/>
            <person name="Peles E."/>
            <person name="Reilly M.M."/>
            <person name="Shy M.E."/>
            <person name="Zuchner S."/>
        </authorList>
    </citation>
    <scope>SUBCELLULAR LOCATION</scope>
    <scope>MUTAGENESIS OF TYR-136</scope>
</reference>
<reference key="8">
    <citation type="journal article" date="2021" name="Brain">
        <authorList>
            <person name="Rebelo A.P."/>
            <person name="Cortese A."/>
            <person name="Abraham A."/>
            <person name="Eshed-Eisenbach Y."/>
            <person name="Shner G."/>
            <person name="Vainshtein A."/>
            <person name="Buglo E."/>
            <person name="Camarena V."/>
            <person name="Gaidosh G."/>
            <person name="Shiekhattar R."/>
            <person name="Abreu L."/>
            <person name="Courel S."/>
            <person name="Burns D.K."/>
            <person name="Bai Y."/>
            <person name="Bacon C."/>
            <person name="Feely S.M.E."/>
            <person name="Castro D."/>
            <person name="Peles E."/>
            <person name="Reilly M.M."/>
            <person name="Shy M.E."/>
            <person name="Zuchner S."/>
        </authorList>
    </citation>
    <scope>ERRATUM OF PUBMED:33889941</scope>
</reference>
<accession>Q99N28</accession>
<accession>Q8BSQ8</accession>
<accession>Q8K1H8</accession>
<sequence>MGAPSALPLLLLLACSWAPGGANLSQDDSQPWTSDETVVAGGTVVLKCQVKDHEDSSLQWSNPAQQTLYFGEKRALRDNRIQLVSSTPHELSISISNVALADEGEYTCSIFTMPVRTAKSLVTVLGIPQKPIITGYKSSLREKETATLNCQSSGSKPAAQLTWRKGDQELHGDQTRIQEDPNGKTFTVSSSVSFQVTREDDGANIVCSVNHESLKGADRSTSQRIEVLYTPTAMIRPEPAHPREGQKLLLHCEGRGNPVPQQYVWVKEGSEPPLKMTQESALIFPFLNKSDSGTYGCTATSNMGSYTAYFTLNVNDPSPVPSSSSTYHAIIGGIVAFIVFLLLILLIFLGHYLIRHKGTYLTHEAKGSDDAPDADTAIINAEGGQSGGDDKKEYFI</sequence>
<name>CADM3_MOUSE</name>
<gene>
    <name type="primary">Cadm3</name>
    <name type="synonym">Igsf4b</name>
    <name type="synonym">Necl1</name>
    <name type="synonym">Syncam3</name>
    <name type="synonym">Tsll1</name>
</gene>
<feature type="signal peptide" evidence="1">
    <location>
        <begin position="1"/>
        <end position="22"/>
    </location>
</feature>
<feature type="chain" id="PRO_0000046068" description="Cell adhesion molecule 3">
    <location>
        <begin position="23"/>
        <end position="396"/>
    </location>
</feature>
<feature type="topological domain" description="Extracellular" evidence="2">
    <location>
        <begin position="23"/>
        <end position="328"/>
    </location>
</feature>
<feature type="transmembrane region" description="Helical" evidence="2">
    <location>
        <begin position="329"/>
        <end position="349"/>
    </location>
</feature>
<feature type="topological domain" description="Cytoplasmic" evidence="2">
    <location>
        <begin position="350"/>
        <end position="396"/>
    </location>
</feature>
<feature type="domain" description="Ig-like V-type">
    <location>
        <begin position="23"/>
        <end position="124"/>
    </location>
</feature>
<feature type="domain" description="Ig-like C2-type 1">
    <location>
        <begin position="128"/>
        <end position="226"/>
    </location>
</feature>
<feature type="domain" description="Ig-like C2-type 2">
    <location>
        <begin position="231"/>
        <end position="313"/>
    </location>
</feature>
<feature type="region of interest" description="Disordered" evidence="4">
    <location>
        <begin position="365"/>
        <end position="396"/>
    </location>
</feature>
<feature type="modified residue" description="Phosphoserine" evidence="10">
    <location>
        <position position="386"/>
    </location>
</feature>
<feature type="glycosylation site" description="N-linked (GlcNAc...) asparagine" evidence="2">
    <location>
        <position position="288"/>
    </location>
</feature>
<feature type="disulfide bond" evidence="3">
    <location>
        <begin position="48"/>
        <end position="108"/>
    </location>
</feature>
<feature type="disulfide bond" evidence="3">
    <location>
        <begin position="150"/>
        <end position="207"/>
    </location>
</feature>
<feature type="disulfide bond" evidence="3">
    <location>
        <begin position="252"/>
        <end position="297"/>
    </location>
</feature>
<feature type="mutagenesis site" description="Nerves from mutant mice exhibit abnormal axonal organization." evidence="8">
    <original>Y</original>
    <variation>C</variation>
    <location>
        <position position="136"/>
    </location>
</feature>
<feature type="strand" evidence="11">
    <location>
        <begin position="37"/>
        <end position="39"/>
    </location>
</feature>
<feature type="strand" evidence="11">
    <location>
        <begin position="44"/>
        <end position="49"/>
    </location>
</feature>
<feature type="strand" evidence="11">
    <location>
        <begin position="58"/>
        <end position="61"/>
    </location>
</feature>
<feature type="strand" evidence="11">
    <location>
        <begin position="67"/>
        <end position="70"/>
    </location>
</feature>
<feature type="strand" evidence="11">
    <location>
        <begin position="79"/>
        <end position="87"/>
    </location>
</feature>
<feature type="strand" evidence="11">
    <location>
        <begin position="90"/>
        <end position="95"/>
    </location>
</feature>
<feature type="helix" evidence="11">
    <location>
        <begin position="100"/>
        <end position="102"/>
    </location>
</feature>
<feature type="strand" evidence="11">
    <location>
        <begin position="104"/>
        <end position="110"/>
    </location>
</feature>
<feature type="strand" evidence="11">
    <location>
        <begin position="112"/>
        <end position="114"/>
    </location>
</feature>
<feature type="strand" evidence="11">
    <location>
        <begin position="116"/>
        <end position="125"/>
    </location>
</feature>
<organism>
    <name type="scientific">Mus musculus</name>
    <name type="common">Mouse</name>
    <dbReference type="NCBI Taxonomy" id="10090"/>
    <lineage>
        <taxon>Eukaryota</taxon>
        <taxon>Metazoa</taxon>
        <taxon>Chordata</taxon>
        <taxon>Craniata</taxon>
        <taxon>Vertebrata</taxon>
        <taxon>Euteleostomi</taxon>
        <taxon>Mammalia</taxon>
        <taxon>Eutheria</taxon>
        <taxon>Euarchontoglires</taxon>
        <taxon>Glires</taxon>
        <taxon>Rodentia</taxon>
        <taxon>Myomorpha</taxon>
        <taxon>Muroidea</taxon>
        <taxon>Muridae</taxon>
        <taxon>Murinae</taxon>
        <taxon>Mus</taxon>
        <taxon>Mus</taxon>
    </lineage>
</organism>
<keyword id="KW-0002">3D-structure</keyword>
<keyword id="KW-0106">Calcium</keyword>
<keyword id="KW-0130">Cell adhesion</keyword>
<keyword id="KW-0965">Cell junction</keyword>
<keyword id="KW-1003">Cell membrane</keyword>
<keyword id="KW-1015">Disulfide bond</keyword>
<keyword id="KW-0325">Glycoprotein</keyword>
<keyword id="KW-0393">Immunoglobulin domain</keyword>
<keyword id="KW-0472">Membrane</keyword>
<keyword id="KW-0597">Phosphoprotein</keyword>
<keyword id="KW-1185">Reference proteome</keyword>
<keyword id="KW-0677">Repeat</keyword>
<keyword id="KW-0732">Signal</keyword>
<keyword id="KW-0812">Transmembrane</keyword>
<keyword id="KW-1133">Transmembrane helix</keyword>
<evidence type="ECO:0000250" key="1">
    <source>
        <dbReference type="UniProtKB" id="Q8N126"/>
    </source>
</evidence>
<evidence type="ECO:0000255" key="2"/>
<evidence type="ECO:0000255" key="3">
    <source>
        <dbReference type="PROSITE-ProRule" id="PRU00114"/>
    </source>
</evidence>
<evidence type="ECO:0000256" key="4">
    <source>
        <dbReference type="SAM" id="MobiDB-lite"/>
    </source>
</evidence>
<evidence type="ECO:0000269" key="5">
    <source>
    </source>
</evidence>
<evidence type="ECO:0000269" key="6">
    <source>
    </source>
</evidence>
<evidence type="ECO:0000269" key="7">
    <source>
    </source>
</evidence>
<evidence type="ECO:0000269" key="8">
    <source>
    </source>
</evidence>
<evidence type="ECO:0000305" key="9"/>
<evidence type="ECO:0007744" key="10">
    <source>
    </source>
</evidence>
<evidence type="ECO:0007829" key="11">
    <source>
        <dbReference type="PDB" id="5ZO2"/>
    </source>
</evidence>
<protein>
    <recommendedName>
        <fullName>Cell adhesion molecule 3</fullName>
    </recommendedName>
    <alternativeName>
        <fullName>Immunoglobulin superfamily member 4B</fullName>
        <shortName>IgSF4B</shortName>
    </alternativeName>
    <alternativeName>
        <fullName>Nectin-like protein 1</fullName>
        <shortName>NECL-1</shortName>
    </alternativeName>
    <alternativeName>
        <fullName>Synaptic cell adhesion molecule 3</fullName>
    </alternativeName>
    <alternativeName>
        <fullName>TSLC1-like protein 1</fullName>
    </alternativeName>
</protein>
<dbReference type="EMBL" id="AY059393">
    <property type="protein sequence ID" value="AAL29691.1"/>
    <property type="molecule type" value="mRNA"/>
</dbReference>
<dbReference type="EMBL" id="AF195662">
    <property type="protein sequence ID" value="AAG35584.1"/>
    <property type="molecule type" value="mRNA"/>
</dbReference>
<dbReference type="EMBL" id="AK030782">
    <property type="protein sequence ID" value="BAC27137.1"/>
    <property type="molecule type" value="mRNA"/>
</dbReference>
<dbReference type="EMBL" id="AK038917">
    <property type="protein sequence ID" value="BAC30168.1"/>
    <property type="molecule type" value="mRNA"/>
</dbReference>
<dbReference type="EMBL" id="AK053077">
    <property type="protein sequence ID" value="BAC35258.1"/>
    <property type="molecule type" value="mRNA"/>
</dbReference>
<dbReference type="EMBL" id="BC029659">
    <property type="protein sequence ID" value="AAH29659.1"/>
    <property type="status" value="ALT_INIT"/>
    <property type="molecule type" value="mRNA"/>
</dbReference>
<dbReference type="CCDS" id="CCDS15528.1"/>
<dbReference type="RefSeq" id="NP_444429.1">
    <property type="nucleotide sequence ID" value="NM_053199.4"/>
</dbReference>
<dbReference type="PDB" id="5ZO2">
    <property type="method" value="X-ray"/>
    <property type="resolution" value="3.29 A"/>
    <property type="chains" value="B=23-133"/>
</dbReference>
<dbReference type="PDBsum" id="5ZO2"/>
<dbReference type="SMR" id="Q99N28"/>
<dbReference type="BioGRID" id="220505">
    <property type="interactions" value="4"/>
</dbReference>
<dbReference type="FunCoup" id="Q99N28">
    <property type="interactions" value="309"/>
</dbReference>
<dbReference type="IntAct" id="Q99N28">
    <property type="interactions" value="2"/>
</dbReference>
<dbReference type="STRING" id="10090.ENSMUSP00000106851"/>
<dbReference type="GlyCosmos" id="Q99N28">
    <property type="glycosylation" value="1 site, No reported glycans"/>
</dbReference>
<dbReference type="GlyGen" id="Q99N28">
    <property type="glycosylation" value="1 site, 1 N-linked glycan (1 site)"/>
</dbReference>
<dbReference type="iPTMnet" id="Q99N28"/>
<dbReference type="PhosphoSitePlus" id="Q99N28"/>
<dbReference type="SwissPalm" id="Q99N28"/>
<dbReference type="PaxDb" id="10090-ENSMUSP00000106851"/>
<dbReference type="PeptideAtlas" id="Q99N28"/>
<dbReference type="ProteomicsDB" id="265419"/>
<dbReference type="ABCD" id="Q99N28">
    <property type="antibodies" value="3 sequenced antibodies"/>
</dbReference>
<dbReference type="Antibodypedia" id="669">
    <property type="antibodies" value="344 antibodies from 34 providers"/>
</dbReference>
<dbReference type="DNASU" id="94332"/>
<dbReference type="Ensembl" id="ENSMUST00000111220.8">
    <property type="protein sequence ID" value="ENSMUSP00000106851.2"/>
    <property type="gene ID" value="ENSMUSG00000005338.15"/>
</dbReference>
<dbReference type="GeneID" id="94332"/>
<dbReference type="KEGG" id="mmu:94332"/>
<dbReference type="UCSC" id="uc007drh.1">
    <property type="organism name" value="mouse"/>
</dbReference>
<dbReference type="AGR" id="MGI:2137858"/>
<dbReference type="CTD" id="57863"/>
<dbReference type="MGI" id="MGI:2137858">
    <property type="gene designation" value="Cadm3"/>
</dbReference>
<dbReference type="VEuPathDB" id="HostDB:ENSMUSG00000005338"/>
<dbReference type="eggNOG" id="ENOG502QWJ8">
    <property type="taxonomic scope" value="Eukaryota"/>
</dbReference>
<dbReference type="GeneTree" id="ENSGT00940000159779"/>
<dbReference type="HOGENOM" id="CLU_047574_1_0_1"/>
<dbReference type="InParanoid" id="Q99N28"/>
<dbReference type="OMA" id="ANVTCTV"/>
<dbReference type="PhylomeDB" id="Q99N28"/>
<dbReference type="TreeFam" id="TF326804"/>
<dbReference type="Reactome" id="R-MMU-418990">
    <property type="pathway name" value="Adherens junctions interactions"/>
</dbReference>
<dbReference type="Reactome" id="R-MMU-420597">
    <property type="pathway name" value="Nectin/Necl trans heterodimerization"/>
</dbReference>
<dbReference type="BioGRID-ORCS" id="94332">
    <property type="hits" value="0 hits in 76 CRISPR screens"/>
</dbReference>
<dbReference type="ChiTaRS" id="Cadm3">
    <property type="organism name" value="mouse"/>
</dbReference>
<dbReference type="PRO" id="PR:Q99N28"/>
<dbReference type="Proteomes" id="UP000000589">
    <property type="component" value="Chromosome 1"/>
</dbReference>
<dbReference type="RNAct" id="Q99N28">
    <property type="molecule type" value="protein"/>
</dbReference>
<dbReference type="Bgee" id="ENSMUSG00000005338">
    <property type="expression patterns" value="Expressed in cerebellar cortex and 193 other cell types or tissues"/>
</dbReference>
<dbReference type="ExpressionAtlas" id="Q99N28">
    <property type="expression patterns" value="baseline and differential"/>
</dbReference>
<dbReference type="GO" id="GO:0005911">
    <property type="term" value="C:cell-cell junction"/>
    <property type="evidence" value="ECO:0000314"/>
    <property type="project" value="MGI"/>
</dbReference>
<dbReference type="GO" id="GO:0098688">
    <property type="term" value="C:parallel fiber to Purkinje cell synapse"/>
    <property type="evidence" value="ECO:0000314"/>
    <property type="project" value="SynGO"/>
</dbReference>
<dbReference type="GO" id="GO:0042734">
    <property type="term" value="C:presynaptic membrane"/>
    <property type="evidence" value="ECO:0000314"/>
    <property type="project" value="SynGO"/>
</dbReference>
<dbReference type="GO" id="GO:0042803">
    <property type="term" value="F:protein homodimerization activity"/>
    <property type="evidence" value="ECO:0000353"/>
    <property type="project" value="HGNC-UCL"/>
</dbReference>
<dbReference type="GO" id="GO:0007157">
    <property type="term" value="P:heterophilic cell-cell adhesion via plasma membrane cell adhesion molecules"/>
    <property type="evidence" value="ECO:0000314"/>
    <property type="project" value="HGNC-UCL"/>
</dbReference>
<dbReference type="GO" id="GO:0007156">
    <property type="term" value="P:homophilic cell adhesion via plasma membrane adhesion molecules"/>
    <property type="evidence" value="ECO:0000314"/>
    <property type="project" value="HGNC-UCL"/>
</dbReference>
<dbReference type="GO" id="GO:0008104">
    <property type="term" value="P:protein localization"/>
    <property type="evidence" value="ECO:0000315"/>
    <property type="project" value="MGI"/>
</dbReference>
<dbReference type="CDD" id="cd05882">
    <property type="entry name" value="IgV_1_Necl-1"/>
    <property type="match status" value="1"/>
</dbReference>
<dbReference type="FunFam" id="2.60.40.10:FF:000013">
    <property type="entry name" value="cell adhesion molecule 1 isoform X1"/>
    <property type="match status" value="1"/>
</dbReference>
<dbReference type="FunFam" id="2.60.40.10:FF:000510">
    <property type="entry name" value="cell adhesion molecule 3 isoform X1"/>
    <property type="match status" value="1"/>
</dbReference>
<dbReference type="FunFam" id="2.60.40.10:FF:000894">
    <property type="entry name" value="cell adhesion molecule 3 isoform X1"/>
    <property type="match status" value="1"/>
</dbReference>
<dbReference type="Gene3D" id="2.60.40.10">
    <property type="entry name" value="Immunoglobulins"/>
    <property type="match status" value="3"/>
</dbReference>
<dbReference type="InterPro" id="IPR013162">
    <property type="entry name" value="CD80_C2-set"/>
</dbReference>
<dbReference type="InterPro" id="IPR007110">
    <property type="entry name" value="Ig-like_dom"/>
</dbReference>
<dbReference type="InterPro" id="IPR036179">
    <property type="entry name" value="Ig-like_dom_sf"/>
</dbReference>
<dbReference type="InterPro" id="IPR013783">
    <property type="entry name" value="Ig-like_fold"/>
</dbReference>
<dbReference type="InterPro" id="IPR003599">
    <property type="entry name" value="Ig_sub"/>
</dbReference>
<dbReference type="InterPro" id="IPR003598">
    <property type="entry name" value="Ig_sub2"/>
</dbReference>
<dbReference type="InterPro" id="IPR013106">
    <property type="entry name" value="Ig_V-set"/>
</dbReference>
<dbReference type="InterPro" id="IPR003585">
    <property type="entry name" value="Neurexin-like"/>
</dbReference>
<dbReference type="PANTHER" id="PTHR45889:SF5">
    <property type="entry name" value="CELL ADHESION MOLECULE 3"/>
    <property type="match status" value="1"/>
</dbReference>
<dbReference type="PANTHER" id="PTHR45889">
    <property type="entry name" value="IG-LIKE DOMAIN-CONTAINING PROTEIN"/>
    <property type="match status" value="1"/>
</dbReference>
<dbReference type="Pfam" id="PF08205">
    <property type="entry name" value="C2-set_2"/>
    <property type="match status" value="1"/>
</dbReference>
<dbReference type="Pfam" id="PF13927">
    <property type="entry name" value="Ig_3"/>
    <property type="match status" value="1"/>
</dbReference>
<dbReference type="Pfam" id="PF07686">
    <property type="entry name" value="V-set"/>
    <property type="match status" value="1"/>
</dbReference>
<dbReference type="SMART" id="SM00294">
    <property type="entry name" value="4.1m"/>
    <property type="match status" value="1"/>
</dbReference>
<dbReference type="SMART" id="SM00409">
    <property type="entry name" value="IG"/>
    <property type="match status" value="3"/>
</dbReference>
<dbReference type="SMART" id="SM00408">
    <property type="entry name" value="IGc2"/>
    <property type="match status" value="3"/>
</dbReference>
<dbReference type="SUPFAM" id="SSF48726">
    <property type="entry name" value="Immunoglobulin"/>
    <property type="match status" value="3"/>
</dbReference>
<dbReference type="PROSITE" id="PS50835">
    <property type="entry name" value="IG_LIKE"/>
    <property type="match status" value="3"/>
</dbReference>
<comment type="function">
    <text evidence="6 7">Involved in cell-cell adhesion. Has both calcium-independent homophilic cell-cell adhesion activity and calcium-independent heterophilic cell-cell adhesion activity with IGSF4, NECTIN1 and NECTIN3. Interaction with EPB41L1 may regulate structure or function of cell-cell junctions.</text>
</comment>
<comment type="subunit">
    <text evidence="6 7">Homodimer. Can form trans-heterodimers with NECTIN3. Interacts with EPB41L1, DLG3, PALS2 and CASK.</text>
</comment>
<comment type="subcellular location">
    <subcellularLocation>
        <location evidence="5 6 7 8">Cell membrane</location>
        <topology evidence="7">Single-pass type I membrane protein</topology>
    </subcellularLocation>
    <subcellularLocation>
        <location evidence="5 6 7">Cell junction</location>
    </subcellularLocation>
</comment>
<comment type="tissue specificity">
    <text evidence="5 6 7">Mainly expressed in brain, in neuronal cell bodies of cerebellum, cortex, hippocampus, hypothalamus and spinal cord. In spinal cord predominantly expressed in motor neurons. Expressed in axons, presynaptic nerve terminals, glia cell processes.</text>
</comment>
<comment type="developmental stage">
    <text evidence="7">At 14.5 dpc predominantly expressed in the nervous system.</text>
</comment>
<comment type="domain">
    <text evidence="6 7">The cytoplasmic region mediates interaction with EPB41L1, DLG3, PALS2 and CASK.</text>
</comment>
<comment type="similarity">
    <text evidence="9">Belongs to the nectin family.</text>
</comment>
<comment type="sequence caution" evidence="9">
    <conflict type="erroneous initiation">
        <sequence resource="EMBL-CDS" id="AAH29659"/>
    </conflict>
</comment>